<keyword id="KW-0067">ATP-binding</keyword>
<keyword id="KW-0963">Cytoplasm</keyword>
<keyword id="KW-0418">Kinase</keyword>
<keyword id="KW-0460">Magnesium</keyword>
<keyword id="KW-0479">Metal-binding</keyword>
<keyword id="KW-0546">Nucleotide metabolism</keyword>
<keyword id="KW-0547">Nucleotide-binding</keyword>
<keyword id="KW-0597">Phosphoprotein</keyword>
<keyword id="KW-1185">Reference proteome</keyword>
<keyword id="KW-0808">Transferase</keyword>
<reference key="1">
    <citation type="submission" date="2007-10" db="EMBL/GenBank/DDBJ databases">
        <title>Complete sequence of Desulfococcus oleovorans Hxd3.</title>
        <authorList>
            <consortium name="US DOE Joint Genome Institute"/>
            <person name="Copeland A."/>
            <person name="Lucas S."/>
            <person name="Lapidus A."/>
            <person name="Barry K."/>
            <person name="Glavina del Rio T."/>
            <person name="Dalin E."/>
            <person name="Tice H."/>
            <person name="Pitluck S."/>
            <person name="Kiss H."/>
            <person name="Brettin T."/>
            <person name="Bruce D."/>
            <person name="Detter J.C."/>
            <person name="Han C."/>
            <person name="Schmutz J."/>
            <person name="Larimer F."/>
            <person name="Land M."/>
            <person name="Hauser L."/>
            <person name="Kyrpides N."/>
            <person name="Kim E."/>
            <person name="Wawrik B."/>
            <person name="Richardson P."/>
        </authorList>
    </citation>
    <scope>NUCLEOTIDE SEQUENCE [LARGE SCALE GENOMIC DNA]</scope>
    <source>
        <strain>DSM 6200 / JCM 39069 / Hxd3</strain>
    </source>
</reference>
<dbReference type="EC" id="2.7.4.6" evidence="1"/>
<dbReference type="EMBL" id="CP000859">
    <property type="protein sequence ID" value="ABW68428.1"/>
    <property type="molecule type" value="Genomic_DNA"/>
</dbReference>
<dbReference type="RefSeq" id="WP_012176040.1">
    <property type="nucleotide sequence ID" value="NC_009943.1"/>
</dbReference>
<dbReference type="SMR" id="A8ZWU7"/>
<dbReference type="STRING" id="96561.Dole_2625"/>
<dbReference type="KEGG" id="dol:Dole_2625"/>
<dbReference type="eggNOG" id="COG0105">
    <property type="taxonomic scope" value="Bacteria"/>
</dbReference>
<dbReference type="HOGENOM" id="CLU_060216_6_3_7"/>
<dbReference type="OrthoDB" id="9801161at2"/>
<dbReference type="Proteomes" id="UP000008561">
    <property type="component" value="Chromosome"/>
</dbReference>
<dbReference type="GO" id="GO:0005737">
    <property type="term" value="C:cytoplasm"/>
    <property type="evidence" value="ECO:0007669"/>
    <property type="project" value="UniProtKB-SubCell"/>
</dbReference>
<dbReference type="GO" id="GO:0005524">
    <property type="term" value="F:ATP binding"/>
    <property type="evidence" value="ECO:0007669"/>
    <property type="project" value="UniProtKB-UniRule"/>
</dbReference>
<dbReference type="GO" id="GO:0046872">
    <property type="term" value="F:metal ion binding"/>
    <property type="evidence" value="ECO:0007669"/>
    <property type="project" value="UniProtKB-KW"/>
</dbReference>
<dbReference type="GO" id="GO:0004550">
    <property type="term" value="F:nucleoside diphosphate kinase activity"/>
    <property type="evidence" value="ECO:0007669"/>
    <property type="project" value="UniProtKB-UniRule"/>
</dbReference>
<dbReference type="GO" id="GO:0006241">
    <property type="term" value="P:CTP biosynthetic process"/>
    <property type="evidence" value="ECO:0007669"/>
    <property type="project" value="UniProtKB-UniRule"/>
</dbReference>
<dbReference type="GO" id="GO:0006183">
    <property type="term" value="P:GTP biosynthetic process"/>
    <property type="evidence" value="ECO:0007669"/>
    <property type="project" value="UniProtKB-UniRule"/>
</dbReference>
<dbReference type="GO" id="GO:0006228">
    <property type="term" value="P:UTP biosynthetic process"/>
    <property type="evidence" value="ECO:0007669"/>
    <property type="project" value="UniProtKB-UniRule"/>
</dbReference>
<dbReference type="CDD" id="cd04413">
    <property type="entry name" value="NDPk_I"/>
    <property type="match status" value="1"/>
</dbReference>
<dbReference type="FunFam" id="3.30.70.141:FF:000003">
    <property type="entry name" value="Nucleoside diphosphate kinase"/>
    <property type="match status" value="1"/>
</dbReference>
<dbReference type="Gene3D" id="3.30.70.141">
    <property type="entry name" value="Nucleoside diphosphate kinase-like domain"/>
    <property type="match status" value="1"/>
</dbReference>
<dbReference type="HAMAP" id="MF_00451">
    <property type="entry name" value="NDP_kinase"/>
    <property type="match status" value="1"/>
</dbReference>
<dbReference type="InterPro" id="IPR034907">
    <property type="entry name" value="NDK-like_dom"/>
</dbReference>
<dbReference type="InterPro" id="IPR036850">
    <property type="entry name" value="NDK-like_dom_sf"/>
</dbReference>
<dbReference type="InterPro" id="IPR001564">
    <property type="entry name" value="Nucleoside_diP_kinase"/>
</dbReference>
<dbReference type="InterPro" id="IPR023005">
    <property type="entry name" value="Nucleoside_diP_kinase_AS"/>
</dbReference>
<dbReference type="NCBIfam" id="NF001908">
    <property type="entry name" value="PRK00668.1"/>
    <property type="match status" value="1"/>
</dbReference>
<dbReference type="PANTHER" id="PTHR11349">
    <property type="entry name" value="NUCLEOSIDE DIPHOSPHATE KINASE"/>
    <property type="match status" value="1"/>
</dbReference>
<dbReference type="Pfam" id="PF00334">
    <property type="entry name" value="NDK"/>
    <property type="match status" value="1"/>
</dbReference>
<dbReference type="PRINTS" id="PR01243">
    <property type="entry name" value="NUCDPKINASE"/>
</dbReference>
<dbReference type="SMART" id="SM00562">
    <property type="entry name" value="NDK"/>
    <property type="match status" value="1"/>
</dbReference>
<dbReference type="SUPFAM" id="SSF54919">
    <property type="entry name" value="Nucleoside diphosphate kinase, NDK"/>
    <property type="match status" value="1"/>
</dbReference>
<dbReference type="PROSITE" id="PS00469">
    <property type="entry name" value="NDPK"/>
    <property type="match status" value="1"/>
</dbReference>
<dbReference type="PROSITE" id="PS51374">
    <property type="entry name" value="NDPK_LIKE"/>
    <property type="match status" value="1"/>
</dbReference>
<organism>
    <name type="scientific">Desulfosudis oleivorans (strain DSM 6200 / JCM 39069 / Hxd3)</name>
    <name type="common">Desulfococcus oleovorans</name>
    <dbReference type="NCBI Taxonomy" id="96561"/>
    <lineage>
        <taxon>Bacteria</taxon>
        <taxon>Pseudomonadati</taxon>
        <taxon>Thermodesulfobacteriota</taxon>
        <taxon>Desulfobacteria</taxon>
        <taxon>Desulfobacterales</taxon>
        <taxon>Desulfosudaceae</taxon>
        <taxon>Desulfosudis</taxon>
    </lineage>
</organism>
<sequence>MERTLSIVKPDGVERGLIGEVVRRLEKEGLKIIAMKMIHMTRAQAEGFYAVHRERPFFESLTTFMSSGPVVVMVLEGEDAILRYRTLMGATNYKDAAEGTIRRDFATEIERNVVHGSDAPDTAAFEIGYFFNSFEIMGR</sequence>
<protein>
    <recommendedName>
        <fullName evidence="1">Nucleoside diphosphate kinase</fullName>
        <shortName evidence="1">NDK</shortName>
        <shortName evidence="1">NDP kinase</shortName>
        <ecNumber evidence="1">2.7.4.6</ecNumber>
    </recommendedName>
    <alternativeName>
        <fullName evidence="1">Nucleoside-2-P kinase</fullName>
    </alternativeName>
</protein>
<evidence type="ECO:0000255" key="1">
    <source>
        <dbReference type="HAMAP-Rule" id="MF_00451"/>
    </source>
</evidence>
<feature type="chain" id="PRO_1000135252" description="Nucleoside diphosphate kinase">
    <location>
        <begin position="1"/>
        <end position="139"/>
    </location>
</feature>
<feature type="active site" description="Pros-phosphohistidine intermediate" evidence="1">
    <location>
        <position position="115"/>
    </location>
</feature>
<feature type="binding site" evidence="1">
    <location>
        <position position="9"/>
    </location>
    <ligand>
        <name>ATP</name>
        <dbReference type="ChEBI" id="CHEBI:30616"/>
    </ligand>
</feature>
<feature type="binding site" evidence="1">
    <location>
        <position position="57"/>
    </location>
    <ligand>
        <name>ATP</name>
        <dbReference type="ChEBI" id="CHEBI:30616"/>
    </ligand>
</feature>
<feature type="binding site" evidence="1">
    <location>
        <position position="85"/>
    </location>
    <ligand>
        <name>ATP</name>
        <dbReference type="ChEBI" id="CHEBI:30616"/>
    </ligand>
</feature>
<feature type="binding site" evidence="1">
    <location>
        <position position="91"/>
    </location>
    <ligand>
        <name>ATP</name>
        <dbReference type="ChEBI" id="CHEBI:30616"/>
    </ligand>
</feature>
<feature type="binding site" evidence="1">
    <location>
        <position position="102"/>
    </location>
    <ligand>
        <name>ATP</name>
        <dbReference type="ChEBI" id="CHEBI:30616"/>
    </ligand>
</feature>
<feature type="binding site" evidence="1">
    <location>
        <position position="112"/>
    </location>
    <ligand>
        <name>ATP</name>
        <dbReference type="ChEBI" id="CHEBI:30616"/>
    </ligand>
</feature>
<name>NDK_DESOH</name>
<proteinExistence type="inferred from homology"/>
<gene>
    <name evidence="1" type="primary">ndk</name>
    <name type="ordered locus">Dole_2625</name>
</gene>
<comment type="function">
    <text evidence="1">Major role in the synthesis of nucleoside triphosphates other than ATP. The ATP gamma phosphate is transferred to the NDP beta phosphate via a ping-pong mechanism, using a phosphorylated active-site intermediate.</text>
</comment>
<comment type="catalytic activity">
    <reaction evidence="1">
        <text>a 2'-deoxyribonucleoside 5'-diphosphate + ATP = a 2'-deoxyribonucleoside 5'-triphosphate + ADP</text>
        <dbReference type="Rhea" id="RHEA:44640"/>
        <dbReference type="ChEBI" id="CHEBI:30616"/>
        <dbReference type="ChEBI" id="CHEBI:61560"/>
        <dbReference type="ChEBI" id="CHEBI:73316"/>
        <dbReference type="ChEBI" id="CHEBI:456216"/>
        <dbReference type="EC" id="2.7.4.6"/>
    </reaction>
</comment>
<comment type="catalytic activity">
    <reaction evidence="1">
        <text>a ribonucleoside 5'-diphosphate + ATP = a ribonucleoside 5'-triphosphate + ADP</text>
        <dbReference type="Rhea" id="RHEA:18113"/>
        <dbReference type="ChEBI" id="CHEBI:30616"/>
        <dbReference type="ChEBI" id="CHEBI:57930"/>
        <dbReference type="ChEBI" id="CHEBI:61557"/>
        <dbReference type="ChEBI" id="CHEBI:456216"/>
        <dbReference type="EC" id="2.7.4.6"/>
    </reaction>
</comment>
<comment type="cofactor">
    <cofactor evidence="1">
        <name>Mg(2+)</name>
        <dbReference type="ChEBI" id="CHEBI:18420"/>
    </cofactor>
</comment>
<comment type="subunit">
    <text evidence="1">Homotetramer.</text>
</comment>
<comment type="subcellular location">
    <subcellularLocation>
        <location evidence="1">Cytoplasm</location>
    </subcellularLocation>
</comment>
<comment type="similarity">
    <text evidence="1">Belongs to the NDK family.</text>
</comment>
<accession>A8ZWU7</accession>